<comment type="function">
    <text evidence="6 7">Molecular calcium-binding chaperone promoting folding, oligomeric assembly and quality control in the ER via the calreticulin/calnexin cycle. This lectin may interact transiently with almost all of the monoglucosylated glycoproteins that are synthesized in the ER. Required for elongation factor Tu receptor (EFR) accumulation and for EFR, but not flagellin-sensing 2 (FLS2) signaling.</text>
</comment>
<comment type="subcellular location">
    <subcellularLocation>
        <location evidence="4 6">Endoplasmic reticulum lumen</location>
    </subcellularLocation>
</comment>
<comment type="alternative products">
    <event type="alternative splicing"/>
    <isoform>
        <id>O04153-1</id>
        <name>1</name>
        <sequence type="displayed"/>
    </isoform>
    <text>A number of isoforms are produced. According to EST sequences.</text>
</comment>
<comment type="domain">
    <text evidence="1">Can be divided into a N-terminal globular domain, a proline-rich P-domain forming an elongated arm-like structure and a C-terminal acidic domain. The P-domain binds one molecule of calcium with high affinity, whereas the acidic C-domain binds multiple calcium ions with low affinity (By similarity).</text>
</comment>
<comment type="domain">
    <text evidence="1">The interaction with glycans occurs through a binding site in the globular lectin domain.</text>
</comment>
<comment type="domain">
    <text evidence="1">The zinc binding sites are localized to the N-domain.</text>
</comment>
<comment type="disruption phenotype">
    <text evidence="6">Loss of seedling growth inhibition in response to the pathogen-associated molecular pattern (PAMP) elf18 and increased susceptibility to phytopathogenic bacteria.</text>
</comment>
<comment type="similarity">
    <text evidence="8">Belongs to the calreticulin family.</text>
</comment>
<comment type="sequence caution" evidence="8">
    <conflict type="erroneous gene model prediction">
        <sequence resource="EMBL-CDS" id="AAF22902"/>
    </conflict>
</comment>
<organism>
    <name type="scientific">Arabidopsis thaliana</name>
    <name type="common">Mouse-ear cress</name>
    <dbReference type="NCBI Taxonomy" id="3702"/>
    <lineage>
        <taxon>Eukaryota</taxon>
        <taxon>Viridiplantae</taxon>
        <taxon>Streptophyta</taxon>
        <taxon>Embryophyta</taxon>
        <taxon>Tracheophyta</taxon>
        <taxon>Spermatophyta</taxon>
        <taxon>Magnoliopsida</taxon>
        <taxon>eudicotyledons</taxon>
        <taxon>Gunneridae</taxon>
        <taxon>Pentapetalae</taxon>
        <taxon>rosids</taxon>
        <taxon>malvids</taxon>
        <taxon>Brassicales</taxon>
        <taxon>Brassicaceae</taxon>
        <taxon>Camelineae</taxon>
        <taxon>Arabidopsis</taxon>
    </lineage>
</organism>
<dbReference type="EMBL" id="U66345">
    <property type="protein sequence ID" value="AAC49697.1"/>
    <property type="molecule type" value="mRNA"/>
</dbReference>
<dbReference type="EMBL" id="AC006932">
    <property type="protein sequence ID" value="AAF22902.1"/>
    <property type="status" value="ALT_SEQ"/>
    <property type="molecule type" value="Genomic_DNA"/>
</dbReference>
<dbReference type="EMBL" id="CP002684">
    <property type="protein sequence ID" value="AEE28291.1"/>
    <property type="molecule type" value="Genomic_DNA"/>
</dbReference>
<dbReference type="EMBL" id="AY056320">
    <property type="protein sequence ID" value="AAL07169.1"/>
    <property type="molecule type" value="mRNA"/>
</dbReference>
<dbReference type="RefSeq" id="NP_563816.1">
    <molecule id="O04153-1"/>
    <property type="nucleotide sequence ID" value="NM_100718.5"/>
</dbReference>
<dbReference type="SMR" id="O04153"/>
<dbReference type="BioGRID" id="22606">
    <property type="interactions" value="4"/>
</dbReference>
<dbReference type="DIP" id="DIP-48930N"/>
<dbReference type="FunCoup" id="O04153">
    <property type="interactions" value="3005"/>
</dbReference>
<dbReference type="IntAct" id="O04153">
    <property type="interactions" value="1"/>
</dbReference>
<dbReference type="STRING" id="3702.O04153"/>
<dbReference type="GlyCosmos" id="O04153">
    <property type="glycosylation" value="1 site, No reported glycans"/>
</dbReference>
<dbReference type="GlyGen" id="O04153">
    <property type="glycosylation" value="1 site"/>
</dbReference>
<dbReference type="PaxDb" id="3702-AT1G08450.1"/>
<dbReference type="ProteomicsDB" id="240246">
    <molecule id="O04153-1"/>
</dbReference>
<dbReference type="EnsemblPlants" id="AT1G08450.1">
    <molecule id="O04153-1"/>
    <property type="protein sequence ID" value="AT1G08450.1"/>
    <property type="gene ID" value="AT1G08450"/>
</dbReference>
<dbReference type="GeneID" id="837365"/>
<dbReference type="Gramene" id="AT1G08450.1">
    <molecule id="O04153-1"/>
    <property type="protein sequence ID" value="AT1G08450.1"/>
    <property type="gene ID" value="AT1G08450"/>
</dbReference>
<dbReference type="KEGG" id="ath:AT1G08450"/>
<dbReference type="Araport" id="AT1G08450"/>
<dbReference type="TAIR" id="AT1G08450">
    <property type="gene designation" value="CRT3"/>
</dbReference>
<dbReference type="eggNOG" id="KOG0674">
    <property type="taxonomic scope" value="Eukaryota"/>
</dbReference>
<dbReference type="HOGENOM" id="CLU_018224_0_2_1"/>
<dbReference type="InParanoid" id="O04153"/>
<dbReference type="OMA" id="ERWVKSD"/>
<dbReference type="PhylomeDB" id="O04153"/>
<dbReference type="CD-CODE" id="4299E36E">
    <property type="entry name" value="Nucleolus"/>
</dbReference>
<dbReference type="PRO" id="PR:O04153"/>
<dbReference type="Proteomes" id="UP000006548">
    <property type="component" value="Chromosome 1"/>
</dbReference>
<dbReference type="ExpressionAtlas" id="O04153">
    <property type="expression patterns" value="baseline and differential"/>
</dbReference>
<dbReference type="GO" id="GO:0005783">
    <property type="term" value="C:endoplasmic reticulum"/>
    <property type="evidence" value="ECO:0000314"/>
    <property type="project" value="TAIR"/>
</dbReference>
<dbReference type="GO" id="GO:0005788">
    <property type="term" value="C:endoplasmic reticulum lumen"/>
    <property type="evidence" value="ECO:0007669"/>
    <property type="project" value="UniProtKB-SubCell"/>
</dbReference>
<dbReference type="GO" id="GO:0005789">
    <property type="term" value="C:endoplasmic reticulum membrane"/>
    <property type="evidence" value="ECO:0000314"/>
    <property type="project" value="TAIR"/>
</dbReference>
<dbReference type="GO" id="GO:0005576">
    <property type="term" value="C:extracellular region"/>
    <property type="evidence" value="ECO:0007005"/>
    <property type="project" value="TAIR"/>
</dbReference>
<dbReference type="GO" id="GO:0005509">
    <property type="term" value="F:calcium ion binding"/>
    <property type="evidence" value="ECO:0007669"/>
    <property type="project" value="InterPro"/>
</dbReference>
<dbReference type="GO" id="GO:0030246">
    <property type="term" value="F:carbohydrate binding"/>
    <property type="evidence" value="ECO:0007669"/>
    <property type="project" value="UniProtKB-KW"/>
</dbReference>
<dbReference type="GO" id="GO:0051082">
    <property type="term" value="F:unfolded protein binding"/>
    <property type="evidence" value="ECO:0007669"/>
    <property type="project" value="InterPro"/>
</dbReference>
<dbReference type="GO" id="GO:0046283">
    <property type="term" value="P:anthocyanin-containing compound metabolic process"/>
    <property type="evidence" value="ECO:0000315"/>
    <property type="project" value="TAIR"/>
</dbReference>
<dbReference type="GO" id="GO:0042742">
    <property type="term" value="P:defense response to bacterium"/>
    <property type="evidence" value="ECO:0000315"/>
    <property type="project" value="TAIR"/>
</dbReference>
<dbReference type="GO" id="GO:0009626">
    <property type="term" value="P:plant-type hypersensitive response"/>
    <property type="evidence" value="ECO:0000315"/>
    <property type="project" value="TAIR"/>
</dbReference>
<dbReference type="GO" id="GO:0006457">
    <property type="term" value="P:protein folding"/>
    <property type="evidence" value="ECO:0007669"/>
    <property type="project" value="InterPro"/>
</dbReference>
<dbReference type="FunFam" id="2.10.250.10:FF:000002">
    <property type="entry name" value="Calreticulin"/>
    <property type="match status" value="1"/>
</dbReference>
<dbReference type="FunFam" id="2.60.120.200:FF:000018">
    <property type="entry name" value="Calreticulin 1b"/>
    <property type="match status" value="1"/>
</dbReference>
<dbReference type="Gene3D" id="2.60.120.200">
    <property type="match status" value="1"/>
</dbReference>
<dbReference type="Gene3D" id="2.10.250.10">
    <property type="entry name" value="Calreticulin/calnexin, P domain"/>
    <property type="match status" value="1"/>
</dbReference>
<dbReference type="InterPro" id="IPR001580">
    <property type="entry name" value="Calret/calnex"/>
</dbReference>
<dbReference type="InterPro" id="IPR018124">
    <property type="entry name" value="Calret/calnex_CS"/>
</dbReference>
<dbReference type="InterPro" id="IPR009169">
    <property type="entry name" value="Calreticulin"/>
</dbReference>
<dbReference type="InterPro" id="IPR009033">
    <property type="entry name" value="Calreticulin/calnexin_P_dom_sf"/>
</dbReference>
<dbReference type="InterPro" id="IPR013320">
    <property type="entry name" value="ConA-like_dom_sf"/>
</dbReference>
<dbReference type="PANTHER" id="PTHR11073">
    <property type="entry name" value="CALRETICULIN AND CALNEXIN"/>
    <property type="match status" value="1"/>
</dbReference>
<dbReference type="PANTHER" id="PTHR11073:SF45">
    <property type="entry name" value="CALRETICULIN-3"/>
    <property type="match status" value="1"/>
</dbReference>
<dbReference type="Pfam" id="PF00262">
    <property type="entry name" value="Calreticulin"/>
    <property type="match status" value="2"/>
</dbReference>
<dbReference type="PIRSF" id="PIRSF002356">
    <property type="entry name" value="Calreticulin"/>
    <property type="match status" value="1"/>
</dbReference>
<dbReference type="PRINTS" id="PR00626">
    <property type="entry name" value="CALRETICULIN"/>
</dbReference>
<dbReference type="SUPFAM" id="SSF49899">
    <property type="entry name" value="Concanavalin A-like lectins/glucanases"/>
    <property type="match status" value="1"/>
</dbReference>
<dbReference type="SUPFAM" id="SSF63887">
    <property type="entry name" value="P-domain of calnexin/calreticulin"/>
    <property type="match status" value="1"/>
</dbReference>
<dbReference type="PROSITE" id="PS00803">
    <property type="entry name" value="CALRETICULIN_1"/>
    <property type="match status" value="1"/>
</dbReference>
<dbReference type="PROSITE" id="PS00804">
    <property type="entry name" value="CALRETICULIN_2"/>
    <property type="match status" value="1"/>
</dbReference>
<dbReference type="PROSITE" id="PS00805">
    <property type="entry name" value="CALRETICULIN_REPEAT"/>
    <property type="match status" value="1"/>
</dbReference>
<dbReference type="PROSITE" id="PS00014">
    <property type="entry name" value="ER_TARGET"/>
    <property type="match status" value="1"/>
</dbReference>
<proteinExistence type="evidence at protein level"/>
<evidence type="ECO:0000250" key="1"/>
<evidence type="ECO:0000250" key="2">
    <source>
        <dbReference type="UniProtKB" id="P14211"/>
    </source>
</evidence>
<evidence type="ECO:0000255" key="3"/>
<evidence type="ECO:0000255" key="4">
    <source>
        <dbReference type="PROSITE-ProRule" id="PRU10138"/>
    </source>
</evidence>
<evidence type="ECO:0000256" key="5">
    <source>
        <dbReference type="SAM" id="MobiDB-lite"/>
    </source>
</evidence>
<evidence type="ECO:0000269" key="6">
    <source>
    </source>
</evidence>
<evidence type="ECO:0000269" key="7">
    <source>
    </source>
</evidence>
<evidence type="ECO:0000305" key="8"/>
<accession>O04153</accession>
<accession>Q93ZR4</accession>
<accession>Q9SJE7</accession>
<keyword id="KW-0025">Alternative splicing</keyword>
<keyword id="KW-0106">Calcium</keyword>
<keyword id="KW-0143">Chaperone</keyword>
<keyword id="KW-1015">Disulfide bond</keyword>
<keyword id="KW-0256">Endoplasmic reticulum</keyword>
<keyword id="KW-0325">Glycoprotein</keyword>
<keyword id="KW-0430">Lectin</keyword>
<keyword id="KW-0479">Metal-binding</keyword>
<keyword id="KW-1185">Reference proteome</keyword>
<keyword id="KW-0677">Repeat</keyword>
<keyword id="KW-0732">Signal</keyword>
<keyword id="KW-0862">Zinc</keyword>
<name>CALR3_ARATH</name>
<gene>
    <name type="primary">CRT3</name>
    <name type="ordered locus">At1g08450</name>
    <name type="ORF">T27G7.13</name>
</gene>
<protein>
    <recommendedName>
        <fullName>Calreticulin-3</fullName>
    </recommendedName>
    <alternativeName>
        <fullName>Protein PRIORITY IN SWEET LIFE 1</fullName>
    </alternativeName>
</protein>
<feature type="signal peptide" evidence="3">
    <location>
        <begin position="1"/>
        <end position="28"/>
    </location>
</feature>
<feature type="chain" id="PRO_0000004186" description="Calreticulin-3">
    <location>
        <begin position="29"/>
        <end position="424"/>
    </location>
</feature>
<feature type="repeat" description="1-1">
    <location>
        <begin position="200"/>
        <end position="211"/>
    </location>
</feature>
<feature type="repeat" description="1-2">
    <location>
        <begin position="219"/>
        <end position="230"/>
    </location>
</feature>
<feature type="repeat" description="1-3">
    <location>
        <begin position="236"/>
        <end position="247"/>
    </location>
</feature>
<feature type="repeat" description="1-4">
    <location>
        <begin position="254"/>
        <end position="265"/>
    </location>
</feature>
<feature type="repeat" description="2-1">
    <location>
        <begin position="269"/>
        <end position="279"/>
    </location>
</feature>
<feature type="repeat" description="2-2">
    <location>
        <begin position="283"/>
        <end position="293"/>
    </location>
</feature>
<feature type="repeat" description="2-3">
    <location>
        <begin position="297"/>
        <end position="307"/>
    </location>
</feature>
<feature type="region of interest" description="4 X approximate repeats">
    <location>
        <begin position="200"/>
        <end position="265"/>
    </location>
</feature>
<feature type="region of interest" description="Disordered" evidence="5">
    <location>
        <begin position="228"/>
        <end position="275"/>
    </location>
</feature>
<feature type="region of interest" description="3 X approximate repeats">
    <location>
        <begin position="269"/>
        <end position="307"/>
    </location>
</feature>
<feature type="region of interest" description="Disordered" evidence="5">
    <location>
        <begin position="368"/>
        <end position="424"/>
    </location>
</feature>
<feature type="short sequence motif" description="Prevents secretion from ER" evidence="4">
    <location>
        <begin position="421"/>
        <end position="424"/>
    </location>
</feature>
<feature type="compositionally biased region" description="Acidic residues" evidence="5">
    <location>
        <begin position="228"/>
        <end position="237"/>
    </location>
</feature>
<feature type="compositionally biased region" description="Basic and acidic residues" evidence="5">
    <location>
        <begin position="238"/>
        <end position="260"/>
    </location>
</feature>
<feature type="compositionally biased region" description="Basic and acidic residues" evidence="5">
    <location>
        <begin position="368"/>
        <end position="401"/>
    </location>
</feature>
<feature type="compositionally biased region" description="Basic residues" evidence="5">
    <location>
        <begin position="402"/>
        <end position="411"/>
    </location>
</feature>
<feature type="compositionally biased region" description="Basic and acidic residues" evidence="5">
    <location>
        <begin position="412"/>
        <end position="424"/>
    </location>
</feature>
<feature type="binding site" evidence="2">
    <location>
        <position position="118"/>
    </location>
    <ligand>
        <name>an alpha-D-glucoside</name>
        <dbReference type="ChEBI" id="CHEBI:22390"/>
    </ligand>
</feature>
<feature type="binding site" evidence="2">
    <location>
        <position position="120"/>
    </location>
    <ligand>
        <name>an alpha-D-glucoside</name>
        <dbReference type="ChEBI" id="CHEBI:22390"/>
    </ligand>
</feature>
<feature type="binding site" evidence="2">
    <location>
        <position position="137"/>
    </location>
    <ligand>
        <name>an alpha-D-glucoside</name>
        <dbReference type="ChEBI" id="CHEBI:22390"/>
    </ligand>
</feature>
<feature type="binding site" evidence="2">
    <location>
        <position position="144"/>
    </location>
    <ligand>
        <name>an alpha-D-glucoside</name>
        <dbReference type="ChEBI" id="CHEBI:22390"/>
    </ligand>
</feature>
<feature type="binding site" evidence="2">
    <location>
        <position position="327"/>
    </location>
    <ligand>
        <name>an alpha-D-glucoside</name>
        <dbReference type="ChEBI" id="CHEBI:22390"/>
    </ligand>
</feature>
<feature type="glycosylation site" description="N-linked (GlcNAc...) asparagine" evidence="3">
    <location>
        <position position="97"/>
    </location>
</feature>
<feature type="disulfide bond" evidence="1">
    <location>
        <begin position="114"/>
        <end position="146"/>
    </location>
</feature>
<feature type="mutagenesis site" description="In psl1-1; no effect on EFR accumulation, but decreased response to the PAMP elf18." evidence="7">
    <original>P</original>
    <variation>L</variation>
    <location>
        <position position="67"/>
    </location>
</feature>
<feature type="mutagenesis site" description="In crt3-3; loss of response to the PAMP elf18, but no effect on the response to PAMP flg22." evidence="6">
    <original>G</original>
    <variation>D</variation>
    <location>
        <position position="115"/>
    </location>
</feature>
<feature type="mutagenesis site" description="In crt3-4; loss of response to the PAMP elf18, but no effect on the response to PAMP flg22." evidence="6">
    <original>G</original>
    <variation>E</variation>
    <location>
        <position position="142"/>
    </location>
</feature>
<feature type="mutagenesis site" description="In crt3-5; loss of response to the PAMP elf18, but no effect on the response to PAMP flg22." evidence="6">
    <original>G</original>
    <variation>E</variation>
    <location>
        <position position="147"/>
    </location>
</feature>
<feature type="mutagenesis site" description="In crt3-6; loss of response to the PAMP elf18, but no effect on the response to PAMP flg22." evidence="6">
    <original>H</original>
    <variation>Y</variation>
    <location>
        <position position="179"/>
    </location>
</feature>
<feature type="mutagenesis site" description="In crt3-7; loss of response to the PAMP elf18, but no effect on the response to PAMP flg22." evidence="6">
    <original>G</original>
    <variation>D</variation>
    <location>
        <position position="203"/>
    </location>
</feature>
<feature type="mutagenesis site" description="In psl1-3; no effect on EFR accumulation, but decreased response to the PAMP elf18." evidence="7">
    <original>G</original>
    <variation>S</variation>
    <location>
        <position position="244"/>
    </location>
</feature>
<feature type="mutagenesis site" description="In crt3-10; loss of response to the PAMP elf18, but no effect on the response to PAMP flg22." evidence="6">
    <original>P</original>
    <variation>S</variation>
    <location>
        <position position="293"/>
    </location>
</feature>
<feature type="mutagenesis site" description="In psl1-4; loss of EFR accumulation and loss of response to the PAMP elf18." evidence="7">
    <original>S</original>
    <variation>L</variation>
    <location>
        <position position="335"/>
    </location>
</feature>
<feature type="sequence conflict" description="In Ref. 1; AAC49697." evidence="8" ref="1">
    <original>S</original>
    <variation>F</variation>
    <location>
        <position position="279"/>
    </location>
</feature>
<reference key="1">
    <citation type="journal article" date="1997" name="Plant Physiol.">
        <title>Abundant accumulation of the calcium-binding molecular chaperone calreticulin in specific floral tissues of Arabidopsis thaliana.</title>
        <authorList>
            <person name="Nelson D.E."/>
            <person name="Glaunsinger B."/>
            <person name="Bohnert H.J."/>
        </authorList>
    </citation>
    <scope>NUCLEOTIDE SEQUENCE [MRNA]</scope>
</reference>
<reference key="2">
    <citation type="journal article" date="2000" name="Nature">
        <title>Sequence and analysis of chromosome 1 of the plant Arabidopsis thaliana.</title>
        <authorList>
            <person name="Theologis A."/>
            <person name="Ecker J.R."/>
            <person name="Palm C.J."/>
            <person name="Federspiel N.A."/>
            <person name="Kaul S."/>
            <person name="White O."/>
            <person name="Alonso J."/>
            <person name="Altafi H."/>
            <person name="Araujo R."/>
            <person name="Bowman C.L."/>
            <person name="Brooks S.Y."/>
            <person name="Buehler E."/>
            <person name="Chan A."/>
            <person name="Chao Q."/>
            <person name="Chen H."/>
            <person name="Cheuk R.F."/>
            <person name="Chin C.W."/>
            <person name="Chung M.K."/>
            <person name="Conn L."/>
            <person name="Conway A.B."/>
            <person name="Conway A.R."/>
            <person name="Creasy T.H."/>
            <person name="Dewar K."/>
            <person name="Dunn P."/>
            <person name="Etgu P."/>
            <person name="Feldblyum T.V."/>
            <person name="Feng J.-D."/>
            <person name="Fong B."/>
            <person name="Fujii C.Y."/>
            <person name="Gill J.E."/>
            <person name="Goldsmith A.D."/>
            <person name="Haas B."/>
            <person name="Hansen N.F."/>
            <person name="Hughes B."/>
            <person name="Huizar L."/>
            <person name="Hunter J.L."/>
            <person name="Jenkins J."/>
            <person name="Johnson-Hopson C."/>
            <person name="Khan S."/>
            <person name="Khaykin E."/>
            <person name="Kim C.J."/>
            <person name="Koo H.L."/>
            <person name="Kremenetskaia I."/>
            <person name="Kurtz D.B."/>
            <person name="Kwan A."/>
            <person name="Lam B."/>
            <person name="Langin-Hooper S."/>
            <person name="Lee A."/>
            <person name="Lee J.M."/>
            <person name="Lenz C.A."/>
            <person name="Li J.H."/>
            <person name="Li Y.-P."/>
            <person name="Lin X."/>
            <person name="Liu S.X."/>
            <person name="Liu Z.A."/>
            <person name="Luros J.S."/>
            <person name="Maiti R."/>
            <person name="Marziali A."/>
            <person name="Militscher J."/>
            <person name="Miranda M."/>
            <person name="Nguyen M."/>
            <person name="Nierman W.C."/>
            <person name="Osborne B.I."/>
            <person name="Pai G."/>
            <person name="Peterson J."/>
            <person name="Pham P.K."/>
            <person name="Rizzo M."/>
            <person name="Rooney T."/>
            <person name="Rowley D."/>
            <person name="Sakano H."/>
            <person name="Salzberg S.L."/>
            <person name="Schwartz J.R."/>
            <person name="Shinn P."/>
            <person name="Southwick A.M."/>
            <person name="Sun H."/>
            <person name="Tallon L.J."/>
            <person name="Tambunga G."/>
            <person name="Toriumi M.J."/>
            <person name="Town C.D."/>
            <person name="Utterback T."/>
            <person name="Van Aken S."/>
            <person name="Vaysberg M."/>
            <person name="Vysotskaia V.S."/>
            <person name="Walker M."/>
            <person name="Wu D."/>
            <person name="Yu G."/>
            <person name="Fraser C.M."/>
            <person name="Venter J.C."/>
            <person name="Davis R.W."/>
        </authorList>
    </citation>
    <scope>NUCLEOTIDE SEQUENCE [LARGE SCALE GENOMIC DNA]</scope>
    <source>
        <strain>cv. Columbia</strain>
    </source>
</reference>
<reference key="3">
    <citation type="journal article" date="2017" name="Plant J.">
        <title>Araport11: a complete reannotation of the Arabidopsis thaliana reference genome.</title>
        <authorList>
            <person name="Cheng C.Y."/>
            <person name="Krishnakumar V."/>
            <person name="Chan A.P."/>
            <person name="Thibaud-Nissen F."/>
            <person name="Schobel S."/>
            <person name="Town C.D."/>
        </authorList>
    </citation>
    <scope>GENOME REANNOTATION</scope>
    <source>
        <strain>cv. Columbia</strain>
    </source>
</reference>
<reference key="4">
    <citation type="journal article" date="2003" name="Science">
        <title>Empirical analysis of transcriptional activity in the Arabidopsis genome.</title>
        <authorList>
            <person name="Yamada K."/>
            <person name="Lim J."/>
            <person name="Dale J.M."/>
            <person name="Chen H."/>
            <person name="Shinn P."/>
            <person name="Palm C.J."/>
            <person name="Southwick A.M."/>
            <person name="Wu H.C."/>
            <person name="Kim C.J."/>
            <person name="Nguyen M."/>
            <person name="Pham P.K."/>
            <person name="Cheuk R.F."/>
            <person name="Karlin-Newmann G."/>
            <person name="Liu S.X."/>
            <person name="Lam B."/>
            <person name="Sakano H."/>
            <person name="Wu T."/>
            <person name="Yu G."/>
            <person name="Miranda M."/>
            <person name="Quach H.L."/>
            <person name="Tripp M."/>
            <person name="Chang C.H."/>
            <person name="Lee J.M."/>
            <person name="Toriumi M.J."/>
            <person name="Chan M.M."/>
            <person name="Tang C.C."/>
            <person name="Onodera C.S."/>
            <person name="Deng J.M."/>
            <person name="Akiyama K."/>
            <person name="Ansari Y."/>
            <person name="Arakawa T."/>
            <person name="Banh J."/>
            <person name="Banno F."/>
            <person name="Bowser L."/>
            <person name="Brooks S.Y."/>
            <person name="Carninci P."/>
            <person name="Chao Q."/>
            <person name="Choy N."/>
            <person name="Enju A."/>
            <person name="Goldsmith A.D."/>
            <person name="Gurjal M."/>
            <person name="Hansen N.F."/>
            <person name="Hayashizaki Y."/>
            <person name="Johnson-Hopson C."/>
            <person name="Hsuan V.W."/>
            <person name="Iida K."/>
            <person name="Karnes M."/>
            <person name="Khan S."/>
            <person name="Koesema E."/>
            <person name="Ishida J."/>
            <person name="Jiang P.X."/>
            <person name="Jones T."/>
            <person name="Kawai J."/>
            <person name="Kamiya A."/>
            <person name="Meyers C."/>
            <person name="Nakajima M."/>
            <person name="Narusaka M."/>
            <person name="Seki M."/>
            <person name="Sakurai T."/>
            <person name="Satou M."/>
            <person name="Tamse R."/>
            <person name="Vaysberg M."/>
            <person name="Wallender E.K."/>
            <person name="Wong C."/>
            <person name="Yamamura Y."/>
            <person name="Yuan S."/>
            <person name="Shinozaki K."/>
            <person name="Davis R.W."/>
            <person name="Theologis A."/>
            <person name="Ecker J.R."/>
        </authorList>
    </citation>
    <scope>NUCLEOTIDE SEQUENCE [LARGE SCALE MRNA]</scope>
    <source>
        <strain>cv. Columbia</strain>
    </source>
</reference>
<reference key="5">
    <citation type="journal article" date="2009" name="EMBO J.">
        <title>Receptor quality control in the endoplasmic reticulum for plant innate immunity.</title>
        <authorList>
            <person name="Saijo Y."/>
            <person name="Tintor N."/>
            <person name="Lu X."/>
            <person name="Rauf P."/>
            <person name="Pajerowska-Mukhtar K."/>
            <person name="Haeweker H."/>
            <person name="Dong X."/>
            <person name="Robatzek S."/>
            <person name="Schulze-Lefert P."/>
        </authorList>
    </citation>
    <scope>FUNCTION</scope>
    <scope>MUTAGENESIS OF PRO-67; GLY-244 AND SER-335</scope>
</reference>
<reference key="6">
    <citation type="journal article" date="2009" name="Proc. Natl. Acad. Sci. U.S.A.">
        <title>Specific ER quality control components required for biogenesis of the plant innate immune receptor EFR.</title>
        <authorList>
            <person name="Li J."/>
            <person name="Zhao-Hui C."/>
            <person name="Batoux M."/>
            <person name="Nekrasov V."/>
            <person name="Roux M."/>
            <person name="Chinchilla D."/>
            <person name="Zipfel C."/>
            <person name="Jones J.D."/>
        </authorList>
    </citation>
    <scope>FUNCTION</scope>
    <scope>MUTAGENESIS OF GLY-115; GLY-142; GLY-147; HIS-179; GLY-203 AND PRO-293</scope>
    <scope>SUBCELLULAR LOCATION</scope>
    <scope>DISRUPTION PHENOTYPE</scope>
</reference>
<sequence length="424" mass="49844">MGLPQNKLSFFCFFFLVSVLTLAPLAFSEIFLEEHFEGGWKSRWVLSDWKRNEGKAGTFKHTAGKWPGDPDNKGIQTYNDAKHYAISAKIPEFSNKNRTLVVQYSVKIEQDIECGGAYIKLLSGYVNQKQFGGDTPYSLMFGPDICGTQTKKLHVIVSYQGQNYPIKKDLQCETDKLNHFYTFILRPDASYSVLVDNKEREFGSMYTDWDILPPRKIKVKNAKKPEDWDDREYIDDPNDVKPEGFDSIPREIPDRKAKEPEDWDEEENGLWEPPKIPNSAYKGPWKAKRIKNPNYKGKWKNPWIDNPEFEDDPDLYVLKSIKYAGIEVWQVKAGSIFDNILICDDPAYARSIVDDYFAQHRESEKELFAEAEKERKAREDEEARIAREEGERRRKERDHRYGDRRRRYKRPNPRDYMDDYHDEL</sequence>